<comment type="catalytic activity">
    <reaction evidence="4 5">
        <text>D-glyceraldehyde 3-phosphate + phosphate + NAD(+) = (2R)-3-phospho-glyceroyl phosphate + NADH + H(+)</text>
        <dbReference type="Rhea" id="RHEA:10300"/>
        <dbReference type="ChEBI" id="CHEBI:15378"/>
        <dbReference type="ChEBI" id="CHEBI:43474"/>
        <dbReference type="ChEBI" id="CHEBI:57540"/>
        <dbReference type="ChEBI" id="CHEBI:57604"/>
        <dbReference type="ChEBI" id="CHEBI:57945"/>
        <dbReference type="ChEBI" id="CHEBI:59776"/>
        <dbReference type="EC" id="1.2.1.12"/>
    </reaction>
</comment>
<comment type="pathway">
    <text evidence="5">Carbohydrate degradation; glycolysis; pyruvate from D-glyceraldehyde 3-phosphate: step 1/5.</text>
</comment>
<comment type="subunit">
    <text evidence="2">Homotetramer.</text>
</comment>
<comment type="subcellular location">
    <subcellularLocation>
        <location evidence="1">Cytoplasm</location>
    </subcellularLocation>
</comment>
<comment type="similarity">
    <text evidence="3">Belongs to the glyceraldehyde-3-phosphate dehydrogenase family.</text>
</comment>
<sequence length="329" mass="35253">MVSIAINGFGRIGRLVLRIALERKNIDVVAINDPFISVDYAAYMFKYDSTHGKYKGEVSHDGSNLIINGKKVAVFQEKDPATLPWGKLGVDIAVDSTGVFKELDSAQKHIDAGAKKVVITAPSKTAPMFVVGVNEDKYNGEKIVSNASCTTNCLAPIAKIINDEFGIEEGLMTTVHSITATQKTVDGPSHKDWRGGRTASGNIIPSSTGAAKAVGKVLPELQGKLTGMAFRVPTTDVSVVDLTVKLVKAATYDEIKAAVKKVSEGKLKDVVGYTEDAVVSSDFLGDTHSTIFDAAAGIQLSPKFVKLVAWYDNEYGYSTRVVDLVEHVA</sequence>
<gene>
    <name evidence="6" type="primary">GAP1</name>
</gene>
<reference evidence="7" key="1">
    <citation type="journal article" date="1995" name="Yeast">
        <title>Characterization of the glyceraldehyde-3-phosphate dehydrogenase gene family from Kluyveromyces marxianus -- polymerase chain reaction-single-strand conformation polymorphism as a tool for the study of multigenic families.</title>
        <authorList>
            <person name="Fernandes P.A."/>
            <person name="Sena-Esteves M."/>
            <person name="Moradas-Ferreira P."/>
        </authorList>
    </citation>
    <scope>NUCLEOTIDE SEQUENCE [GENOMIC DNA]</scope>
    <scope>CATALYTIC ACTIVITY</scope>
    <scope>PATHWAY</scope>
    <source>
        <strain evidence="5">ATCC 10022 / CBS 6432 / NCTC 2303 / NRRL Y-665</strain>
    </source>
</reference>
<reference key="2">
    <citation type="journal article" date="2006" name="J. Biol. Chem.">
        <title>The crystal and solution structures of glyceraldehyde-3-phosphate dehydrogenase reveal different quaternary structures.</title>
        <authorList>
            <person name="Ferreira-da-Silva F."/>
            <person name="Pereira P.J.B."/>
            <person name="Gales L."/>
            <person name="Roessle M."/>
            <person name="Svergun D.I."/>
            <person name="Moradas-Ferreira P."/>
            <person name="Damas A.M."/>
        </authorList>
    </citation>
    <scope>X-RAY CRYSTALLOGRAPHY (2.3 ANGSTROMS)</scope>
    <source>
        <strain>ATCC 10022 / CBS 6432 / NCTC 2303 / NRRL Y-665</strain>
    </source>
</reference>
<dbReference type="EC" id="1.2.1.12"/>
<dbReference type="PIR" id="S57279">
    <property type="entry name" value="S57279"/>
</dbReference>
<dbReference type="PDB" id="2I5P">
    <property type="method" value="X-ray"/>
    <property type="resolution" value="2.30 A"/>
    <property type="chains" value="O/P=1-329"/>
</dbReference>
<dbReference type="PDBsum" id="2I5P"/>
<dbReference type="SASBDB" id="P84998"/>
<dbReference type="SMR" id="P84998"/>
<dbReference type="VEuPathDB" id="FungiDB:KLMA_40218"/>
<dbReference type="UniPathway" id="UPA00109">
    <property type="reaction ID" value="UER00184"/>
</dbReference>
<dbReference type="EvolutionaryTrace" id="P84998"/>
<dbReference type="GO" id="GO:0005829">
    <property type="term" value="C:cytosol"/>
    <property type="evidence" value="ECO:0007669"/>
    <property type="project" value="UniProtKB-ARBA"/>
</dbReference>
<dbReference type="GO" id="GO:0030312">
    <property type="term" value="C:external encapsulating structure"/>
    <property type="evidence" value="ECO:0007669"/>
    <property type="project" value="UniProtKB-ARBA"/>
</dbReference>
<dbReference type="GO" id="GO:0004365">
    <property type="term" value="F:glyceraldehyde-3-phosphate dehydrogenase (NAD+) (phosphorylating) activity"/>
    <property type="evidence" value="ECO:0007669"/>
    <property type="project" value="UniProtKB-EC"/>
</dbReference>
<dbReference type="GO" id="GO:0051287">
    <property type="term" value="F:NAD binding"/>
    <property type="evidence" value="ECO:0007669"/>
    <property type="project" value="InterPro"/>
</dbReference>
<dbReference type="GO" id="GO:0050661">
    <property type="term" value="F:NADP binding"/>
    <property type="evidence" value="ECO:0007669"/>
    <property type="project" value="InterPro"/>
</dbReference>
<dbReference type="GO" id="GO:0006006">
    <property type="term" value="P:glucose metabolic process"/>
    <property type="evidence" value="ECO:0007669"/>
    <property type="project" value="InterPro"/>
</dbReference>
<dbReference type="GO" id="GO:0006096">
    <property type="term" value="P:glycolytic process"/>
    <property type="evidence" value="ECO:0007669"/>
    <property type="project" value="UniProtKB-UniPathway"/>
</dbReference>
<dbReference type="CDD" id="cd18126">
    <property type="entry name" value="GAPDH_I_C"/>
    <property type="match status" value="1"/>
</dbReference>
<dbReference type="CDD" id="cd05214">
    <property type="entry name" value="GAPDH_I_N"/>
    <property type="match status" value="1"/>
</dbReference>
<dbReference type="FunFam" id="3.30.360.10:FF:000001">
    <property type="entry name" value="Glyceraldehyde-3-phosphate dehydrogenase"/>
    <property type="match status" value="1"/>
</dbReference>
<dbReference type="FunFam" id="3.40.50.720:FF:000020">
    <property type="entry name" value="Glyceraldehyde-3-phosphate dehydrogenase"/>
    <property type="match status" value="1"/>
</dbReference>
<dbReference type="Gene3D" id="3.30.360.10">
    <property type="entry name" value="Dihydrodipicolinate Reductase, domain 2"/>
    <property type="match status" value="1"/>
</dbReference>
<dbReference type="Gene3D" id="3.40.50.720">
    <property type="entry name" value="NAD(P)-binding Rossmann-like Domain"/>
    <property type="match status" value="1"/>
</dbReference>
<dbReference type="InterPro" id="IPR020831">
    <property type="entry name" value="GlycerAld/Erythrose_P_DH"/>
</dbReference>
<dbReference type="InterPro" id="IPR020830">
    <property type="entry name" value="GlycerAld_3-P_DH_AS"/>
</dbReference>
<dbReference type="InterPro" id="IPR020829">
    <property type="entry name" value="GlycerAld_3-P_DH_cat"/>
</dbReference>
<dbReference type="InterPro" id="IPR020828">
    <property type="entry name" value="GlycerAld_3-P_DH_NAD(P)-bd"/>
</dbReference>
<dbReference type="InterPro" id="IPR006424">
    <property type="entry name" value="Glyceraldehyde-3-P_DH_1"/>
</dbReference>
<dbReference type="InterPro" id="IPR036291">
    <property type="entry name" value="NAD(P)-bd_dom_sf"/>
</dbReference>
<dbReference type="NCBIfam" id="TIGR01534">
    <property type="entry name" value="GAPDH-I"/>
    <property type="match status" value="1"/>
</dbReference>
<dbReference type="PANTHER" id="PTHR10836">
    <property type="entry name" value="GLYCERALDEHYDE 3-PHOSPHATE DEHYDROGENASE"/>
    <property type="match status" value="1"/>
</dbReference>
<dbReference type="PANTHER" id="PTHR10836:SF76">
    <property type="entry name" value="GLYCERALDEHYDE-3-PHOSPHATE DEHYDROGENASE-RELATED"/>
    <property type="match status" value="1"/>
</dbReference>
<dbReference type="Pfam" id="PF02800">
    <property type="entry name" value="Gp_dh_C"/>
    <property type="match status" value="1"/>
</dbReference>
<dbReference type="Pfam" id="PF00044">
    <property type="entry name" value="Gp_dh_N"/>
    <property type="match status" value="1"/>
</dbReference>
<dbReference type="PIRSF" id="PIRSF000149">
    <property type="entry name" value="GAP_DH"/>
    <property type="match status" value="1"/>
</dbReference>
<dbReference type="PRINTS" id="PR00078">
    <property type="entry name" value="G3PDHDRGNASE"/>
</dbReference>
<dbReference type="SMART" id="SM00846">
    <property type="entry name" value="Gp_dh_N"/>
    <property type="match status" value="1"/>
</dbReference>
<dbReference type="SUPFAM" id="SSF55347">
    <property type="entry name" value="Glyceraldehyde-3-phosphate dehydrogenase-like, C-terminal domain"/>
    <property type="match status" value="1"/>
</dbReference>
<dbReference type="SUPFAM" id="SSF51735">
    <property type="entry name" value="NAD(P)-binding Rossmann-fold domains"/>
    <property type="match status" value="1"/>
</dbReference>
<dbReference type="PROSITE" id="PS00071">
    <property type="entry name" value="GAPDH"/>
    <property type="match status" value="1"/>
</dbReference>
<proteinExistence type="evidence at protein level"/>
<protein>
    <recommendedName>
        <fullName>Glyceraldehyde-3-phosphate dehydrogenase 1</fullName>
        <shortName>GAPDH 1</shortName>
        <ecNumber>1.2.1.12</ecNumber>
    </recommendedName>
</protein>
<accession>P84998</accession>
<keyword id="KW-0002">3D-structure</keyword>
<keyword id="KW-0963">Cytoplasm</keyword>
<keyword id="KW-0324">Glycolysis</keyword>
<keyword id="KW-0520">NAD</keyword>
<keyword id="KW-0560">Oxidoreductase</keyword>
<keyword id="KW-0597">Phosphoprotein</keyword>
<feature type="chain" id="PRO_0000253990" description="Glyceraldehyde-3-phosphate dehydrogenase 1">
    <location>
        <begin position="1"/>
        <end position="329"/>
    </location>
</feature>
<feature type="active site" description="Nucleophile" evidence="2 4">
    <location>
        <position position="149"/>
    </location>
</feature>
<feature type="binding site" evidence="2">
    <location>
        <begin position="11"/>
        <end position="12"/>
    </location>
    <ligand>
        <name>NAD(+)</name>
        <dbReference type="ChEBI" id="CHEBI:57540"/>
    </ligand>
</feature>
<feature type="binding site" evidence="2">
    <location>
        <position position="33"/>
    </location>
    <ligand>
        <name>NAD(+)</name>
        <dbReference type="ChEBI" id="CHEBI:57540"/>
    </ligand>
</feature>
<feature type="binding site" evidence="2">
    <location>
        <position position="77"/>
    </location>
    <ligand>
        <name>NAD(+)</name>
        <dbReference type="ChEBI" id="CHEBI:57540"/>
    </ligand>
</feature>
<feature type="binding site" evidence="2">
    <location>
        <begin position="148"/>
        <end position="150"/>
    </location>
    <ligand>
        <name>D-glyceraldehyde 3-phosphate</name>
        <dbReference type="ChEBI" id="CHEBI:59776"/>
    </ligand>
</feature>
<feature type="binding site" evidence="2">
    <location>
        <position position="179"/>
    </location>
    <ligand>
        <name>D-glyceraldehyde 3-phosphate</name>
        <dbReference type="ChEBI" id="CHEBI:59776"/>
    </ligand>
</feature>
<feature type="binding site" evidence="2">
    <location>
        <begin position="208"/>
        <end position="209"/>
    </location>
    <ligand>
        <name>D-glyceraldehyde 3-phosphate</name>
        <dbReference type="ChEBI" id="CHEBI:59776"/>
    </ligand>
</feature>
<feature type="binding site" evidence="2">
    <location>
        <position position="231"/>
    </location>
    <ligand>
        <name>D-glyceraldehyde 3-phosphate</name>
        <dbReference type="ChEBI" id="CHEBI:59776"/>
    </ligand>
</feature>
<feature type="binding site" evidence="2">
    <location>
        <position position="313"/>
    </location>
    <ligand>
        <name>NAD(+)</name>
        <dbReference type="ChEBI" id="CHEBI:57540"/>
    </ligand>
</feature>
<feature type="site" description="Activates thiol group during catalysis" evidence="2">
    <location>
        <position position="176"/>
    </location>
</feature>
<feature type="modified residue" description="Phosphoserine" evidence="1">
    <location>
        <position position="148"/>
    </location>
</feature>
<feature type="modified residue" description="Phosphoserine" evidence="1">
    <location>
        <position position="177"/>
    </location>
</feature>
<feature type="modified residue" description="Phosphoserine" evidence="1">
    <location>
        <position position="200"/>
    </location>
</feature>
<feature type="strand" evidence="8">
    <location>
        <begin position="2"/>
        <end position="7"/>
    </location>
</feature>
<feature type="helix" evidence="8">
    <location>
        <begin position="11"/>
        <end position="20"/>
    </location>
</feature>
<feature type="strand" evidence="8">
    <location>
        <begin position="26"/>
        <end position="32"/>
    </location>
</feature>
<feature type="helix" evidence="8">
    <location>
        <begin position="38"/>
        <end position="46"/>
    </location>
</feature>
<feature type="turn" evidence="8">
    <location>
        <begin position="49"/>
        <end position="51"/>
    </location>
</feature>
<feature type="strand" evidence="8">
    <location>
        <begin position="58"/>
        <end position="60"/>
    </location>
</feature>
<feature type="strand" evidence="8">
    <location>
        <begin position="62"/>
        <end position="67"/>
    </location>
</feature>
<feature type="strand" evidence="8">
    <location>
        <begin position="70"/>
        <end position="75"/>
    </location>
</feature>
<feature type="helix" evidence="8">
    <location>
        <begin position="80"/>
        <end position="82"/>
    </location>
</feature>
<feature type="turn" evidence="8">
    <location>
        <begin position="85"/>
        <end position="89"/>
    </location>
</feature>
<feature type="strand" evidence="8">
    <location>
        <begin position="91"/>
        <end position="95"/>
    </location>
</feature>
<feature type="strand" evidence="8">
    <location>
        <begin position="97"/>
        <end position="100"/>
    </location>
</feature>
<feature type="helix" evidence="8">
    <location>
        <begin position="103"/>
        <end position="111"/>
    </location>
</feature>
<feature type="strand" evidence="8">
    <location>
        <begin position="115"/>
        <end position="121"/>
    </location>
</feature>
<feature type="strand" evidence="8">
    <location>
        <begin position="124"/>
        <end position="126"/>
    </location>
</feature>
<feature type="turn" evidence="8">
    <location>
        <begin position="131"/>
        <end position="133"/>
    </location>
</feature>
<feature type="helix" evidence="8">
    <location>
        <begin position="135"/>
        <end position="137"/>
    </location>
</feature>
<feature type="strand" evidence="8">
    <location>
        <begin position="142"/>
        <end position="145"/>
    </location>
</feature>
<feature type="helix" evidence="8">
    <location>
        <begin position="149"/>
        <end position="164"/>
    </location>
</feature>
<feature type="strand" evidence="8">
    <location>
        <begin position="167"/>
        <end position="176"/>
    </location>
</feature>
<feature type="strand" evidence="8">
    <location>
        <begin position="204"/>
        <end position="207"/>
    </location>
</feature>
<feature type="turn" evidence="8">
    <location>
        <begin position="210"/>
        <end position="213"/>
    </location>
</feature>
<feature type="helix" evidence="8">
    <location>
        <begin position="214"/>
        <end position="217"/>
    </location>
</feature>
<feature type="helix" evidence="8">
    <location>
        <begin position="219"/>
        <end position="221"/>
    </location>
</feature>
<feature type="strand" evidence="8">
    <location>
        <begin position="224"/>
        <end position="231"/>
    </location>
</feature>
<feature type="strand" evidence="8">
    <location>
        <begin position="236"/>
        <end position="248"/>
    </location>
</feature>
<feature type="helix" evidence="8">
    <location>
        <begin position="252"/>
        <end position="264"/>
    </location>
</feature>
<feature type="turn" evidence="8">
    <location>
        <begin position="265"/>
        <end position="270"/>
    </location>
</feature>
<feature type="strand" evidence="8">
    <location>
        <begin position="271"/>
        <end position="274"/>
    </location>
</feature>
<feature type="helix" evidence="8">
    <location>
        <begin position="280"/>
        <end position="283"/>
    </location>
</feature>
<feature type="strand" evidence="8">
    <location>
        <begin position="288"/>
        <end position="293"/>
    </location>
</feature>
<feature type="turn" evidence="8">
    <location>
        <begin position="294"/>
        <end position="296"/>
    </location>
</feature>
<feature type="strand" evidence="8">
    <location>
        <begin position="298"/>
        <end position="301"/>
    </location>
</feature>
<feature type="strand" evidence="8">
    <location>
        <begin position="304"/>
        <end position="314"/>
    </location>
</feature>
<feature type="helix" evidence="8">
    <location>
        <begin position="315"/>
        <end position="328"/>
    </location>
</feature>
<organism>
    <name type="scientific">Kluyveromyces marxianus</name>
    <name type="common">Yeast</name>
    <name type="synonym">Candida kefyr</name>
    <dbReference type="NCBI Taxonomy" id="4911"/>
    <lineage>
        <taxon>Eukaryota</taxon>
        <taxon>Fungi</taxon>
        <taxon>Dikarya</taxon>
        <taxon>Ascomycota</taxon>
        <taxon>Saccharomycotina</taxon>
        <taxon>Saccharomycetes</taxon>
        <taxon>Saccharomycetales</taxon>
        <taxon>Saccharomycetaceae</taxon>
        <taxon>Kluyveromyces</taxon>
    </lineage>
</organism>
<name>G3P1_KLUMA</name>
<evidence type="ECO:0000250" key="1">
    <source>
        <dbReference type="UniProtKB" id="P00359"/>
    </source>
</evidence>
<evidence type="ECO:0000250" key="2">
    <source>
        <dbReference type="UniProtKB" id="P22513"/>
    </source>
</evidence>
<evidence type="ECO:0000255" key="3"/>
<evidence type="ECO:0000255" key="4">
    <source>
        <dbReference type="PROSITE-ProRule" id="PRU10009"/>
    </source>
</evidence>
<evidence type="ECO:0000269" key="5">
    <source>
    </source>
</evidence>
<evidence type="ECO:0000303" key="6">
    <source>
    </source>
</evidence>
<evidence type="ECO:0000305" key="7"/>
<evidence type="ECO:0007829" key="8">
    <source>
        <dbReference type="PDB" id="2I5P"/>
    </source>
</evidence>